<organism>
    <name type="scientific">Bordetella parapertussis (strain 12822 / ATCC BAA-587 / NCTC 13253)</name>
    <dbReference type="NCBI Taxonomy" id="257311"/>
    <lineage>
        <taxon>Bacteria</taxon>
        <taxon>Pseudomonadati</taxon>
        <taxon>Pseudomonadota</taxon>
        <taxon>Betaproteobacteria</taxon>
        <taxon>Burkholderiales</taxon>
        <taxon>Alcaligenaceae</taxon>
        <taxon>Bordetella</taxon>
    </lineage>
</organism>
<name>LIPA_BORPA</name>
<proteinExistence type="inferred from homology"/>
<reference key="1">
    <citation type="journal article" date="2003" name="Nat. Genet.">
        <title>Comparative analysis of the genome sequences of Bordetella pertussis, Bordetella parapertussis and Bordetella bronchiseptica.</title>
        <authorList>
            <person name="Parkhill J."/>
            <person name="Sebaihia M."/>
            <person name="Preston A."/>
            <person name="Murphy L.D."/>
            <person name="Thomson N.R."/>
            <person name="Harris D.E."/>
            <person name="Holden M.T.G."/>
            <person name="Churcher C.M."/>
            <person name="Bentley S.D."/>
            <person name="Mungall K.L."/>
            <person name="Cerdeno-Tarraga A.-M."/>
            <person name="Temple L."/>
            <person name="James K.D."/>
            <person name="Harris B."/>
            <person name="Quail M.A."/>
            <person name="Achtman M."/>
            <person name="Atkin R."/>
            <person name="Baker S."/>
            <person name="Basham D."/>
            <person name="Bason N."/>
            <person name="Cherevach I."/>
            <person name="Chillingworth T."/>
            <person name="Collins M."/>
            <person name="Cronin A."/>
            <person name="Davis P."/>
            <person name="Doggett J."/>
            <person name="Feltwell T."/>
            <person name="Goble A."/>
            <person name="Hamlin N."/>
            <person name="Hauser H."/>
            <person name="Holroyd S."/>
            <person name="Jagels K."/>
            <person name="Leather S."/>
            <person name="Moule S."/>
            <person name="Norberczak H."/>
            <person name="O'Neil S."/>
            <person name="Ormond D."/>
            <person name="Price C."/>
            <person name="Rabbinowitsch E."/>
            <person name="Rutter S."/>
            <person name="Sanders M."/>
            <person name="Saunders D."/>
            <person name="Seeger K."/>
            <person name="Sharp S."/>
            <person name="Simmonds M."/>
            <person name="Skelton J."/>
            <person name="Squares R."/>
            <person name="Squares S."/>
            <person name="Stevens K."/>
            <person name="Unwin L."/>
            <person name="Whitehead S."/>
            <person name="Barrell B.G."/>
            <person name="Maskell D.J."/>
        </authorList>
    </citation>
    <scope>NUCLEOTIDE SEQUENCE [LARGE SCALE GENOMIC DNA]</scope>
    <source>
        <strain>12822 / ATCC BAA-587 / NCTC 13253</strain>
    </source>
</reference>
<dbReference type="EC" id="2.8.1.8" evidence="1"/>
<dbReference type="EMBL" id="BX640423">
    <property type="protein sequence ID" value="CAE39911.1"/>
    <property type="molecule type" value="Genomic_DNA"/>
</dbReference>
<dbReference type="RefSeq" id="WP_010927328.1">
    <property type="nucleotide sequence ID" value="NC_002928.3"/>
</dbReference>
<dbReference type="SMR" id="Q7W222"/>
<dbReference type="GeneID" id="93206400"/>
<dbReference type="KEGG" id="bpa:BPP0170"/>
<dbReference type="HOGENOM" id="CLU_033144_2_1_4"/>
<dbReference type="UniPathway" id="UPA00538">
    <property type="reaction ID" value="UER00593"/>
</dbReference>
<dbReference type="Proteomes" id="UP000001421">
    <property type="component" value="Chromosome"/>
</dbReference>
<dbReference type="GO" id="GO:0005737">
    <property type="term" value="C:cytoplasm"/>
    <property type="evidence" value="ECO:0007669"/>
    <property type="project" value="UniProtKB-SubCell"/>
</dbReference>
<dbReference type="GO" id="GO:0051539">
    <property type="term" value="F:4 iron, 4 sulfur cluster binding"/>
    <property type="evidence" value="ECO:0007669"/>
    <property type="project" value="UniProtKB-UniRule"/>
</dbReference>
<dbReference type="GO" id="GO:0016992">
    <property type="term" value="F:lipoate synthase activity"/>
    <property type="evidence" value="ECO:0007669"/>
    <property type="project" value="UniProtKB-UniRule"/>
</dbReference>
<dbReference type="GO" id="GO:0046872">
    <property type="term" value="F:metal ion binding"/>
    <property type="evidence" value="ECO:0007669"/>
    <property type="project" value="UniProtKB-KW"/>
</dbReference>
<dbReference type="CDD" id="cd01335">
    <property type="entry name" value="Radical_SAM"/>
    <property type="match status" value="1"/>
</dbReference>
<dbReference type="FunFam" id="3.20.20.70:FF:000040">
    <property type="entry name" value="Lipoyl synthase"/>
    <property type="match status" value="1"/>
</dbReference>
<dbReference type="Gene3D" id="3.20.20.70">
    <property type="entry name" value="Aldolase class I"/>
    <property type="match status" value="1"/>
</dbReference>
<dbReference type="HAMAP" id="MF_00206">
    <property type="entry name" value="Lipoyl_synth"/>
    <property type="match status" value="1"/>
</dbReference>
<dbReference type="InterPro" id="IPR013785">
    <property type="entry name" value="Aldolase_TIM"/>
</dbReference>
<dbReference type="InterPro" id="IPR006638">
    <property type="entry name" value="Elp3/MiaA/NifB-like_rSAM"/>
</dbReference>
<dbReference type="InterPro" id="IPR031691">
    <property type="entry name" value="LIAS_N"/>
</dbReference>
<dbReference type="InterPro" id="IPR003698">
    <property type="entry name" value="Lipoyl_synth"/>
</dbReference>
<dbReference type="InterPro" id="IPR007197">
    <property type="entry name" value="rSAM"/>
</dbReference>
<dbReference type="NCBIfam" id="TIGR00510">
    <property type="entry name" value="lipA"/>
    <property type="match status" value="1"/>
</dbReference>
<dbReference type="NCBIfam" id="NF004019">
    <property type="entry name" value="PRK05481.1"/>
    <property type="match status" value="1"/>
</dbReference>
<dbReference type="NCBIfam" id="NF009544">
    <property type="entry name" value="PRK12928.1"/>
    <property type="match status" value="1"/>
</dbReference>
<dbReference type="PANTHER" id="PTHR10949">
    <property type="entry name" value="LIPOYL SYNTHASE"/>
    <property type="match status" value="1"/>
</dbReference>
<dbReference type="PANTHER" id="PTHR10949:SF0">
    <property type="entry name" value="LIPOYL SYNTHASE, MITOCHONDRIAL"/>
    <property type="match status" value="1"/>
</dbReference>
<dbReference type="Pfam" id="PF16881">
    <property type="entry name" value="LIAS_N"/>
    <property type="match status" value="1"/>
</dbReference>
<dbReference type="Pfam" id="PF04055">
    <property type="entry name" value="Radical_SAM"/>
    <property type="match status" value="1"/>
</dbReference>
<dbReference type="PIRSF" id="PIRSF005963">
    <property type="entry name" value="Lipoyl_synth"/>
    <property type="match status" value="1"/>
</dbReference>
<dbReference type="SFLD" id="SFLDF00271">
    <property type="entry name" value="lipoyl_synthase"/>
    <property type="match status" value="1"/>
</dbReference>
<dbReference type="SFLD" id="SFLDS00029">
    <property type="entry name" value="Radical_SAM"/>
    <property type="match status" value="1"/>
</dbReference>
<dbReference type="SMART" id="SM00729">
    <property type="entry name" value="Elp3"/>
    <property type="match status" value="1"/>
</dbReference>
<dbReference type="SUPFAM" id="SSF102114">
    <property type="entry name" value="Radical SAM enzymes"/>
    <property type="match status" value="1"/>
</dbReference>
<dbReference type="PROSITE" id="PS51918">
    <property type="entry name" value="RADICAL_SAM"/>
    <property type="match status" value="1"/>
</dbReference>
<gene>
    <name evidence="1" type="primary">lipA</name>
    <name type="ordered locus">BPP0170</name>
</gene>
<sequence>MSTLVESPVPSNDSQAAAPAAYDPTQKQKSQAKTARIPIKVVAAEKLKKPEWIRVRAAAPGSRFYDIKRILREHNLHTVCEEASCPNIGECFGKGTATFMIMGDKCTRRCPFCDVGHGRPDPLDTQEPENLARTIAALKLSYVVITSVDRDDLRDGGAAHFVECIAKVREYSPDTRIEVLVPDFRGRLDRALHILNSGPPDVMNHNLETVPRLYKQARPGSDYAHSLKLLVEFKKLHPEVPTKSGLMLGLGETDEEILQVMRDMREHNVDMLTIGQYLQPSEHHLPVLRYVHPDTFAMFEREAYAMGFTHAAVGAMVRSSYHADQQAHAAGVN</sequence>
<protein>
    <recommendedName>
        <fullName evidence="1">Lipoyl synthase</fullName>
        <ecNumber evidence="1">2.8.1.8</ecNumber>
    </recommendedName>
    <alternativeName>
        <fullName evidence="1">Lip-syn</fullName>
        <shortName evidence="1">LS</shortName>
    </alternativeName>
    <alternativeName>
        <fullName evidence="1">Lipoate synthase</fullName>
    </alternativeName>
    <alternativeName>
        <fullName evidence="1">Lipoic acid synthase</fullName>
    </alternativeName>
    <alternativeName>
        <fullName evidence="1">Sulfur insertion protein LipA</fullName>
    </alternativeName>
</protein>
<feature type="chain" id="PRO_0000102291" description="Lipoyl synthase">
    <location>
        <begin position="1"/>
        <end position="333"/>
    </location>
</feature>
<feature type="domain" description="Radical SAM core" evidence="2">
    <location>
        <begin position="91"/>
        <end position="309"/>
    </location>
</feature>
<feature type="region of interest" description="Disordered" evidence="3">
    <location>
        <begin position="1"/>
        <end position="34"/>
    </location>
</feature>
<feature type="compositionally biased region" description="Polar residues" evidence="3">
    <location>
        <begin position="1"/>
        <end position="15"/>
    </location>
</feature>
<feature type="binding site" evidence="1">
    <location>
        <position position="80"/>
    </location>
    <ligand>
        <name>[4Fe-4S] cluster</name>
        <dbReference type="ChEBI" id="CHEBI:49883"/>
        <label>1</label>
    </ligand>
</feature>
<feature type="binding site" evidence="1">
    <location>
        <position position="85"/>
    </location>
    <ligand>
        <name>[4Fe-4S] cluster</name>
        <dbReference type="ChEBI" id="CHEBI:49883"/>
        <label>1</label>
    </ligand>
</feature>
<feature type="binding site" evidence="1">
    <location>
        <position position="91"/>
    </location>
    <ligand>
        <name>[4Fe-4S] cluster</name>
        <dbReference type="ChEBI" id="CHEBI:49883"/>
        <label>1</label>
    </ligand>
</feature>
<feature type="binding site" evidence="1">
    <location>
        <position position="106"/>
    </location>
    <ligand>
        <name>[4Fe-4S] cluster</name>
        <dbReference type="ChEBI" id="CHEBI:49883"/>
        <label>2</label>
        <note>4Fe-4S-S-AdoMet</note>
    </ligand>
</feature>
<feature type="binding site" evidence="1">
    <location>
        <position position="110"/>
    </location>
    <ligand>
        <name>[4Fe-4S] cluster</name>
        <dbReference type="ChEBI" id="CHEBI:49883"/>
        <label>2</label>
        <note>4Fe-4S-S-AdoMet</note>
    </ligand>
</feature>
<feature type="binding site" evidence="1">
    <location>
        <position position="113"/>
    </location>
    <ligand>
        <name>[4Fe-4S] cluster</name>
        <dbReference type="ChEBI" id="CHEBI:49883"/>
        <label>2</label>
        <note>4Fe-4S-S-AdoMet</note>
    </ligand>
</feature>
<feature type="binding site" evidence="1">
    <location>
        <position position="320"/>
    </location>
    <ligand>
        <name>[4Fe-4S] cluster</name>
        <dbReference type="ChEBI" id="CHEBI:49883"/>
        <label>1</label>
    </ligand>
</feature>
<keyword id="KW-0004">4Fe-4S</keyword>
<keyword id="KW-0963">Cytoplasm</keyword>
<keyword id="KW-0408">Iron</keyword>
<keyword id="KW-0411">Iron-sulfur</keyword>
<keyword id="KW-0479">Metal-binding</keyword>
<keyword id="KW-0949">S-adenosyl-L-methionine</keyword>
<keyword id="KW-0808">Transferase</keyword>
<evidence type="ECO:0000255" key="1">
    <source>
        <dbReference type="HAMAP-Rule" id="MF_00206"/>
    </source>
</evidence>
<evidence type="ECO:0000255" key="2">
    <source>
        <dbReference type="PROSITE-ProRule" id="PRU01266"/>
    </source>
</evidence>
<evidence type="ECO:0000256" key="3">
    <source>
        <dbReference type="SAM" id="MobiDB-lite"/>
    </source>
</evidence>
<accession>Q7W222</accession>
<comment type="function">
    <text evidence="1">Catalyzes the radical-mediated insertion of two sulfur atoms into the C-6 and C-8 positions of the octanoyl moiety bound to the lipoyl domains of lipoate-dependent enzymes, thereby converting the octanoylated domains into lipoylated derivatives.</text>
</comment>
<comment type="catalytic activity">
    <reaction evidence="1">
        <text>[[Fe-S] cluster scaffold protein carrying a second [4Fe-4S](2+) cluster] + N(6)-octanoyl-L-lysyl-[protein] + 2 oxidized [2Fe-2S]-[ferredoxin] + 2 S-adenosyl-L-methionine + 4 H(+) = [[Fe-S] cluster scaffold protein] + N(6)-[(R)-dihydrolipoyl]-L-lysyl-[protein] + 4 Fe(3+) + 2 hydrogen sulfide + 2 5'-deoxyadenosine + 2 L-methionine + 2 reduced [2Fe-2S]-[ferredoxin]</text>
        <dbReference type="Rhea" id="RHEA:16585"/>
        <dbReference type="Rhea" id="RHEA-COMP:9928"/>
        <dbReference type="Rhea" id="RHEA-COMP:10000"/>
        <dbReference type="Rhea" id="RHEA-COMP:10001"/>
        <dbReference type="Rhea" id="RHEA-COMP:10475"/>
        <dbReference type="Rhea" id="RHEA-COMP:14568"/>
        <dbReference type="Rhea" id="RHEA-COMP:14569"/>
        <dbReference type="ChEBI" id="CHEBI:15378"/>
        <dbReference type="ChEBI" id="CHEBI:17319"/>
        <dbReference type="ChEBI" id="CHEBI:29034"/>
        <dbReference type="ChEBI" id="CHEBI:29919"/>
        <dbReference type="ChEBI" id="CHEBI:33722"/>
        <dbReference type="ChEBI" id="CHEBI:33737"/>
        <dbReference type="ChEBI" id="CHEBI:33738"/>
        <dbReference type="ChEBI" id="CHEBI:57844"/>
        <dbReference type="ChEBI" id="CHEBI:59789"/>
        <dbReference type="ChEBI" id="CHEBI:78809"/>
        <dbReference type="ChEBI" id="CHEBI:83100"/>
        <dbReference type="EC" id="2.8.1.8"/>
    </reaction>
</comment>
<comment type="cofactor">
    <cofactor evidence="1">
        <name>[4Fe-4S] cluster</name>
        <dbReference type="ChEBI" id="CHEBI:49883"/>
    </cofactor>
    <text evidence="1">Binds 2 [4Fe-4S] clusters per subunit. One cluster is coordinated with 3 cysteines and an exchangeable S-adenosyl-L-methionine.</text>
</comment>
<comment type="pathway">
    <text evidence="1">Protein modification; protein lipoylation via endogenous pathway; protein N(6)-(lipoyl)lysine from octanoyl-[acyl-carrier-protein]: step 2/2.</text>
</comment>
<comment type="subcellular location">
    <subcellularLocation>
        <location evidence="1">Cytoplasm</location>
    </subcellularLocation>
</comment>
<comment type="similarity">
    <text evidence="1">Belongs to the radical SAM superfamily. Lipoyl synthase family.</text>
</comment>